<organism>
    <name type="scientific">Escherichia coli (strain K12)</name>
    <dbReference type="NCBI Taxonomy" id="83333"/>
    <lineage>
        <taxon>Bacteria</taxon>
        <taxon>Pseudomonadati</taxon>
        <taxon>Pseudomonadota</taxon>
        <taxon>Gammaproteobacteria</taxon>
        <taxon>Enterobacterales</taxon>
        <taxon>Enterobacteriaceae</taxon>
        <taxon>Escherichia</taxon>
    </lineage>
</organism>
<name>YUBK_ECOLI</name>
<gene>
    <name type="primary">yubK</name>
    <name type="synonym">yfhB</name>
    <name type="ordered locus">ECOK12F059</name>
</gene>
<geneLocation type="plasmid">
    <name>F</name>
</geneLocation>
<protein>
    <recommendedName>
        <fullName>Uncharacterized serine-rich protein YubK</fullName>
    </recommendedName>
</protein>
<keyword id="KW-0614">Plasmid</keyword>
<keyword id="KW-0732">Signal</keyword>
<dbReference type="EMBL" id="AP001918">
    <property type="protein sequence ID" value="BAA97929.1"/>
    <property type="molecule type" value="Genomic_DNA"/>
</dbReference>
<dbReference type="RefSeq" id="NP_061438.1">
    <property type="nucleotide sequence ID" value="NC_002483.1"/>
</dbReference>
<proteinExistence type="inferred from homology"/>
<sequence length="132" mass="13916">MCPECFFLMLFFCGYRACYCSSSFSSSSSSSSSSSFRSSPAYGFSGRPPGGAGCRERSQRSCLRPGGLPSLTRNPGLQRPFRSRRLCRAVACAPGIPAKGRRDVRGNAVSQTALHVVAAGPCSLPAGCHTPV</sequence>
<reference key="1">
    <citation type="submission" date="2000-04" db="EMBL/GenBank/DDBJ databases">
        <title>Complete nucleotide sequence of the F plasmid: its implications for organization and diversification of plasmid genomes.</title>
        <authorList>
            <person name="Shimizu H."/>
            <person name="Saitoh Y."/>
            <person name="Suda Y."/>
            <person name="Uehara K."/>
            <person name="Sampei G."/>
            <person name="Mizobuchi K."/>
        </authorList>
    </citation>
    <scope>NUCLEOTIDE SEQUENCE [LARGE SCALE GENOMIC DNA]</scope>
    <source>
        <strain>K12 / CR63</strain>
    </source>
</reference>
<feature type="signal peptide" evidence="1">
    <location>
        <begin position="1"/>
        <end position="17"/>
    </location>
</feature>
<feature type="chain" id="PRO_0000262597" description="Uncharacterized serine-rich protein YubK">
    <location>
        <begin position="18"/>
        <end position="132"/>
    </location>
</feature>
<feature type="region of interest" description="Disordered" evidence="2">
    <location>
        <begin position="25"/>
        <end position="79"/>
    </location>
</feature>
<feature type="compositionally biased region" description="Low complexity" evidence="2">
    <location>
        <begin position="25"/>
        <end position="39"/>
    </location>
</feature>
<accession>Q9JMR4</accession>
<evidence type="ECO:0000255" key="1"/>
<evidence type="ECO:0000256" key="2">
    <source>
        <dbReference type="SAM" id="MobiDB-lite"/>
    </source>
</evidence>